<protein>
    <recommendedName>
        <fullName>ATP-dependent RNA helicase dbp8</fullName>
        <ecNumber>3.6.4.13</ecNumber>
    </recommendedName>
</protein>
<accession>A1CKJ0</accession>
<evidence type="ECO:0000250" key="1"/>
<evidence type="ECO:0000255" key="2">
    <source>
        <dbReference type="PROSITE-ProRule" id="PRU00541"/>
    </source>
</evidence>
<evidence type="ECO:0000255" key="3">
    <source>
        <dbReference type="PROSITE-ProRule" id="PRU00542"/>
    </source>
</evidence>
<evidence type="ECO:0000256" key="4">
    <source>
        <dbReference type="SAM" id="MobiDB-lite"/>
    </source>
</evidence>
<evidence type="ECO:0000305" key="5"/>
<name>DBP8_ASPCL</name>
<organism>
    <name type="scientific">Aspergillus clavatus (strain ATCC 1007 / CBS 513.65 / DSM 816 / NCTC 3887 / NRRL 1 / QM 1276 / 107)</name>
    <dbReference type="NCBI Taxonomy" id="344612"/>
    <lineage>
        <taxon>Eukaryota</taxon>
        <taxon>Fungi</taxon>
        <taxon>Dikarya</taxon>
        <taxon>Ascomycota</taxon>
        <taxon>Pezizomycotina</taxon>
        <taxon>Eurotiomycetes</taxon>
        <taxon>Eurotiomycetidae</taxon>
        <taxon>Eurotiales</taxon>
        <taxon>Aspergillaceae</taxon>
        <taxon>Aspergillus</taxon>
        <taxon>Aspergillus subgen. Fumigati</taxon>
    </lineage>
</organism>
<dbReference type="EC" id="3.6.4.13"/>
<dbReference type="EMBL" id="DS027056">
    <property type="protein sequence ID" value="EAW09664.1"/>
    <property type="molecule type" value="Genomic_DNA"/>
</dbReference>
<dbReference type="RefSeq" id="XP_001271090.1">
    <property type="nucleotide sequence ID" value="XM_001271089.1"/>
</dbReference>
<dbReference type="SMR" id="A1CKJ0"/>
<dbReference type="STRING" id="344612.A1CKJ0"/>
<dbReference type="EnsemblFungi" id="EAW09664">
    <property type="protein sequence ID" value="EAW09664"/>
    <property type="gene ID" value="ACLA_038790"/>
</dbReference>
<dbReference type="GeneID" id="4703223"/>
<dbReference type="KEGG" id="act:ACLA_038790"/>
<dbReference type="VEuPathDB" id="FungiDB:ACLA_038790"/>
<dbReference type="eggNOG" id="KOG0340">
    <property type="taxonomic scope" value="Eukaryota"/>
</dbReference>
<dbReference type="HOGENOM" id="CLU_003041_1_1_1"/>
<dbReference type="OMA" id="IMIFTDT"/>
<dbReference type="OrthoDB" id="10261904at2759"/>
<dbReference type="Proteomes" id="UP000006701">
    <property type="component" value="Unassembled WGS sequence"/>
</dbReference>
<dbReference type="GO" id="GO:0005829">
    <property type="term" value="C:cytosol"/>
    <property type="evidence" value="ECO:0007669"/>
    <property type="project" value="TreeGrafter"/>
</dbReference>
<dbReference type="GO" id="GO:0005730">
    <property type="term" value="C:nucleolus"/>
    <property type="evidence" value="ECO:0007669"/>
    <property type="project" value="UniProtKB-SubCell"/>
</dbReference>
<dbReference type="GO" id="GO:0005524">
    <property type="term" value="F:ATP binding"/>
    <property type="evidence" value="ECO:0007669"/>
    <property type="project" value="UniProtKB-KW"/>
</dbReference>
<dbReference type="GO" id="GO:0016887">
    <property type="term" value="F:ATP hydrolysis activity"/>
    <property type="evidence" value="ECO:0007669"/>
    <property type="project" value="RHEA"/>
</dbReference>
<dbReference type="GO" id="GO:0003723">
    <property type="term" value="F:RNA binding"/>
    <property type="evidence" value="ECO:0007669"/>
    <property type="project" value="UniProtKB-KW"/>
</dbReference>
<dbReference type="GO" id="GO:0003724">
    <property type="term" value="F:RNA helicase activity"/>
    <property type="evidence" value="ECO:0007669"/>
    <property type="project" value="UniProtKB-EC"/>
</dbReference>
<dbReference type="GO" id="GO:0006364">
    <property type="term" value="P:rRNA processing"/>
    <property type="evidence" value="ECO:0007669"/>
    <property type="project" value="UniProtKB-KW"/>
</dbReference>
<dbReference type="CDD" id="cd17955">
    <property type="entry name" value="DEADc_DDX49"/>
    <property type="match status" value="1"/>
</dbReference>
<dbReference type="CDD" id="cd18787">
    <property type="entry name" value="SF2_C_DEAD"/>
    <property type="match status" value="1"/>
</dbReference>
<dbReference type="Gene3D" id="3.40.50.300">
    <property type="entry name" value="P-loop containing nucleotide triphosphate hydrolases"/>
    <property type="match status" value="2"/>
</dbReference>
<dbReference type="InterPro" id="IPR011545">
    <property type="entry name" value="DEAD/DEAH_box_helicase_dom"/>
</dbReference>
<dbReference type="InterPro" id="IPR050079">
    <property type="entry name" value="DEAD_box_RNA_helicase"/>
</dbReference>
<dbReference type="InterPro" id="IPR014001">
    <property type="entry name" value="Helicase_ATP-bd"/>
</dbReference>
<dbReference type="InterPro" id="IPR001650">
    <property type="entry name" value="Helicase_C-like"/>
</dbReference>
<dbReference type="InterPro" id="IPR027417">
    <property type="entry name" value="P-loop_NTPase"/>
</dbReference>
<dbReference type="InterPro" id="IPR000629">
    <property type="entry name" value="RNA-helicase_DEAD-box_CS"/>
</dbReference>
<dbReference type="InterPro" id="IPR014014">
    <property type="entry name" value="RNA_helicase_DEAD_Q_motif"/>
</dbReference>
<dbReference type="PANTHER" id="PTHR47959:SF24">
    <property type="entry name" value="ATP-DEPENDENT RNA HELICASE"/>
    <property type="match status" value="1"/>
</dbReference>
<dbReference type="PANTHER" id="PTHR47959">
    <property type="entry name" value="ATP-DEPENDENT RNA HELICASE RHLE-RELATED"/>
    <property type="match status" value="1"/>
</dbReference>
<dbReference type="Pfam" id="PF00270">
    <property type="entry name" value="DEAD"/>
    <property type="match status" value="1"/>
</dbReference>
<dbReference type="Pfam" id="PF00271">
    <property type="entry name" value="Helicase_C"/>
    <property type="match status" value="1"/>
</dbReference>
<dbReference type="SMART" id="SM00487">
    <property type="entry name" value="DEXDc"/>
    <property type="match status" value="1"/>
</dbReference>
<dbReference type="SMART" id="SM00490">
    <property type="entry name" value="HELICc"/>
    <property type="match status" value="1"/>
</dbReference>
<dbReference type="SUPFAM" id="SSF52540">
    <property type="entry name" value="P-loop containing nucleoside triphosphate hydrolases"/>
    <property type="match status" value="1"/>
</dbReference>
<dbReference type="PROSITE" id="PS00039">
    <property type="entry name" value="DEAD_ATP_HELICASE"/>
    <property type="match status" value="1"/>
</dbReference>
<dbReference type="PROSITE" id="PS51192">
    <property type="entry name" value="HELICASE_ATP_BIND_1"/>
    <property type="match status" value="1"/>
</dbReference>
<dbReference type="PROSITE" id="PS51194">
    <property type="entry name" value="HELICASE_CTER"/>
    <property type="match status" value="1"/>
</dbReference>
<dbReference type="PROSITE" id="PS51195">
    <property type="entry name" value="Q_MOTIF"/>
    <property type="match status" value="1"/>
</dbReference>
<reference key="1">
    <citation type="journal article" date="2008" name="PLoS Genet.">
        <title>Genomic islands in the pathogenic filamentous fungus Aspergillus fumigatus.</title>
        <authorList>
            <person name="Fedorova N.D."/>
            <person name="Khaldi N."/>
            <person name="Joardar V.S."/>
            <person name="Maiti R."/>
            <person name="Amedeo P."/>
            <person name="Anderson M.J."/>
            <person name="Crabtree J."/>
            <person name="Silva J.C."/>
            <person name="Badger J.H."/>
            <person name="Albarraq A."/>
            <person name="Angiuoli S."/>
            <person name="Bussey H."/>
            <person name="Bowyer P."/>
            <person name="Cotty P.J."/>
            <person name="Dyer P.S."/>
            <person name="Egan A."/>
            <person name="Galens K."/>
            <person name="Fraser-Liggett C.M."/>
            <person name="Haas B.J."/>
            <person name="Inman J.M."/>
            <person name="Kent R."/>
            <person name="Lemieux S."/>
            <person name="Malavazi I."/>
            <person name="Orvis J."/>
            <person name="Roemer T."/>
            <person name="Ronning C.M."/>
            <person name="Sundaram J.P."/>
            <person name="Sutton G."/>
            <person name="Turner G."/>
            <person name="Venter J.C."/>
            <person name="White O.R."/>
            <person name="Whitty B.R."/>
            <person name="Youngman P."/>
            <person name="Wolfe K.H."/>
            <person name="Goldman G.H."/>
            <person name="Wortman J.R."/>
            <person name="Jiang B."/>
            <person name="Denning D.W."/>
            <person name="Nierman W.C."/>
        </authorList>
    </citation>
    <scope>NUCLEOTIDE SEQUENCE [LARGE SCALE GENOMIC DNA]</scope>
    <source>
        <strain>ATCC 1007 / CBS 513.65 / DSM 816 / NCTC 3887 / NRRL 1 / QM 1276 / 107</strain>
    </source>
</reference>
<feature type="chain" id="PRO_0000281710" description="ATP-dependent RNA helicase dbp8">
    <location>
        <begin position="1"/>
        <end position="523"/>
    </location>
</feature>
<feature type="domain" description="Helicase ATP-binding" evidence="2">
    <location>
        <begin position="124"/>
        <end position="303"/>
    </location>
</feature>
<feature type="domain" description="Helicase C-terminal" evidence="3">
    <location>
        <begin position="335"/>
        <end position="492"/>
    </location>
</feature>
<feature type="region of interest" description="Disordered" evidence="4">
    <location>
        <begin position="1"/>
        <end position="52"/>
    </location>
</feature>
<feature type="short sequence motif" description="Q motif">
    <location>
        <begin position="93"/>
        <end position="121"/>
    </location>
</feature>
<feature type="short sequence motif" description="DEAD box">
    <location>
        <begin position="246"/>
        <end position="249"/>
    </location>
</feature>
<feature type="binding site" evidence="2">
    <location>
        <begin position="137"/>
        <end position="144"/>
    </location>
    <ligand>
        <name>ATP</name>
        <dbReference type="ChEBI" id="CHEBI:30616"/>
    </ligand>
</feature>
<comment type="function">
    <text evidence="1">ATP-binding RNA helicase involved in 40S ribosomal subunit biogenesis and is required for the normal formation of 18S rRNAs through pre-rRNA processing at A0, A1 and A2 sites. Required for vegetative growth (By similarity).</text>
</comment>
<comment type="catalytic activity">
    <reaction>
        <text>ATP + H2O = ADP + phosphate + H(+)</text>
        <dbReference type="Rhea" id="RHEA:13065"/>
        <dbReference type="ChEBI" id="CHEBI:15377"/>
        <dbReference type="ChEBI" id="CHEBI:15378"/>
        <dbReference type="ChEBI" id="CHEBI:30616"/>
        <dbReference type="ChEBI" id="CHEBI:43474"/>
        <dbReference type="ChEBI" id="CHEBI:456216"/>
        <dbReference type="EC" id="3.6.4.13"/>
    </reaction>
</comment>
<comment type="subcellular location">
    <subcellularLocation>
        <location evidence="1">Nucleus</location>
        <location evidence="1">Nucleolus</location>
    </subcellularLocation>
</comment>
<comment type="domain">
    <text>The Q motif is unique to and characteristic of the DEAD box family of RNA helicases and controls ATP binding and hydrolysis.</text>
</comment>
<comment type="similarity">
    <text evidence="5">Belongs to the DEAD box helicase family. DDX49/DBP8 subfamily.</text>
</comment>
<keyword id="KW-0067">ATP-binding</keyword>
<keyword id="KW-0347">Helicase</keyword>
<keyword id="KW-0378">Hydrolase</keyword>
<keyword id="KW-0547">Nucleotide-binding</keyword>
<keyword id="KW-0539">Nucleus</keyword>
<keyword id="KW-1185">Reference proteome</keyword>
<keyword id="KW-0690">Ribosome biogenesis</keyword>
<keyword id="KW-0694">RNA-binding</keyword>
<keyword id="KW-0698">rRNA processing</keyword>
<sequence length="523" mass="56646">MAPPRPEETISEDLDESSGSSETEQPDIQTRAPKRRRLSASSDDSYVAPAPLPTLSRIKKKGAEDAKPVASAGQENPVLIRDALEIGLREEASSFSALNVAPWLVGSLTTLAVRKPTAIQKACIPEILNGKDCIGGSRTGSGKTIAFSVPMLQKWAEDPLGIFGLILTPTRELALQIFEQIKAISAPQSMKPVLITGGTDMRSQALALAGRPHVVVATPGRLADHIKSSGEDTVCGLKRVRMVVLDEADRLLSSGPGSMLPDVETCLSALPPSSERQTLLFTATVTPEVRALKNMPRAANKPPVFVTEISSESQGTVPPTLKQTYLKVPLTHREAFLHVLLSTEGNSTKPAIIFCNHTKTADLLERMLRRLSHRVTSLHSLLPQSERNANLARFRASAARILVATDVASRGLDIPSVSLVVNYDVPRNPDDYVHRVGRTARAGRSGESVTLVGQRDVQLVLAIEARVGRQMEEWSEEGVSIEGRVVRTGVLKEVGEAKREASGEIDEGRDVLGRKRNKLKKVR</sequence>
<proteinExistence type="inferred from homology"/>
<gene>
    <name type="primary">dbp8</name>
    <name type="ORF">ACLA_038790</name>
</gene>